<protein>
    <recommendedName>
        <fullName>Short neurotoxin D</fullName>
    </recommendedName>
</protein>
<organism>
    <name type="scientific">Laticauda colubrina</name>
    <name type="common">Yellow-lipped sea krait</name>
    <name type="synonym">Banded sea krait</name>
    <dbReference type="NCBI Taxonomy" id="8628"/>
    <lineage>
        <taxon>Eukaryota</taxon>
        <taxon>Metazoa</taxon>
        <taxon>Chordata</taxon>
        <taxon>Craniata</taxon>
        <taxon>Vertebrata</taxon>
        <taxon>Euteleostomi</taxon>
        <taxon>Lepidosauria</taxon>
        <taxon>Squamata</taxon>
        <taxon>Bifurcata</taxon>
        <taxon>Unidentata</taxon>
        <taxon>Episquamata</taxon>
        <taxon>Toxicofera</taxon>
        <taxon>Serpentes</taxon>
        <taxon>Colubroidea</taxon>
        <taxon>Elapidae</taxon>
        <taxon>Laticaudinae</taxon>
        <taxon>Laticauda</taxon>
    </lineage>
</organism>
<dbReference type="EMBL" id="AB017946">
    <property type="protein sequence ID" value="BAA75766.1"/>
    <property type="molecule type" value="mRNA"/>
</dbReference>
<dbReference type="EMBL" id="AB017945">
    <property type="protein sequence ID" value="BAA75765.1"/>
    <property type="molecule type" value="mRNA"/>
</dbReference>
<dbReference type="PIR" id="D25866">
    <property type="entry name" value="D25866"/>
</dbReference>
<dbReference type="SMR" id="P10456"/>
<dbReference type="GO" id="GO:0005576">
    <property type="term" value="C:extracellular region"/>
    <property type="evidence" value="ECO:0007669"/>
    <property type="project" value="UniProtKB-SubCell"/>
</dbReference>
<dbReference type="GO" id="GO:0030550">
    <property type="term" value="F:acetylcholine receptor inhibitor activity"/>
    <property type="evidence" value="ECO:0007669"/>
    <property type="project" value="UniProtKB-KW"/>
</dbReference>
<dbReference type="GO" id="GO:0099106">
    <property type="term" value="F:ion channel regulator activity"/>
    <property type="evidence" value="ECO:0007669"/>
    <property type="project" value="UniProtKB-KW"/>
</dbReference>
<dbReference type="GO" id="GO:0090729">
    <property type="term" value="F:toxin activity"/>
    <property type="evidence" value="ECO:0007669"/>
    <property type="project" value="UniProtKB-KW"/>
</dbReference>
<dbReference type="CDD" id="cd00206">
    <property type="entry name" value="TFP_snake_toxin"/>
    <property type="match status" value="1"/>
</dbReference>
<dbReference type="FunFam" id="2.10.60.10:FF:000024">
    <property type="entry name" value="Cytotoxin 1"/>
    <property type="match status" value="1"/>
</dbReference>
<dbReference type="Gene3D" id="2.10.60.10">
    <property type="entry name" value="CD59"/>
    <property type="match status" value="1"/>
</dbReference>
<dbReference type="InterPro" id="IPR003571">
    <property type="entry name" value="Snake_3FTx"/>
</dbReference>
<dbReference type="InterPro" id="IPR045860">
    <property type="entry name" value="Snake_toxin-like_sf"/>
</dbReference>
<dbReference type="InterPro" id="IPR018354">
    <property type="entry name" value="Snake_toxin_con_site"/>
</dbReference>
<dbReference type="InterPro" id="IPR054131">
    <property type="entry name" value="Toxin_cobra-type"/>
</dbReference>
<dbReference type="Pfam" id="PF21947">
    <property type="entry name" value="Toxin_cobra-type"/>
    <property type="match status" value="1"/>
</dbReference>
<dbReference type="SUPFAM" id="SSF57302">
    <property type="entry name" value="Snake toxin-like"/>
    <property type="match status" value="1"/>
</dbReference>
<dbReference type="PROSITE" id="PS00272">
    <property type="entry name" value="SNAKE_TOXIN"/>
    <property type="match status" value="1"/>
</dbReference>
<feature type="signal peptide" evidence="3">
    <location>
        <begin position="1"/>
        <end position="21"/>
    </location>
</feature>
<feature type="chain" id="PRO_0000035439" description="Short neurotoxin D" evidence="3">
    <location>
        <begin position="22"/>
        <end position="83"/>
    </location>
</feature>
<feature type="disulfide bond" evidence="1">
    <location>
        <begin position="24"/>
        <end position="45"/>
    </location>
</feature>
<feature type="disulfide bond" evidence="1">
    <location>
        <begin position="38"/>
        <end position="62"/>
    </location>
</feature>
<feature type="disulfide bond" evidence="1">
    <location>
        <begin position="64"/>
        <end position="75"/>
    </location>
</feature>
<feature type="disulfide bond" evidence="1">
    <location>
        <begin position="76"/>
        <end position="81"/>
    </location>
</feature>
<reference key="1">
    <citation type="submission" date="1998-09" db="EMBL/GenBank/DDBJ databases">
        <title>Classification of sea snakes in genus Laticauda by nucleotide sequences encoding short chain neurotoxins.</title>
        <authorList>
            <person name="Kariya Y."/>
            <person name="Araki S."/>
            <person name="Agu H."/>
            <person name="Tamiya T."/>
            <person name="Tsuchiya T."/>
        </authorList>
    </citation>
    <scope>NUCLEOTIDE SEQUENCE [MRNA]</scope>
    <source>
        <tissue>Venom gland</tissue>
    </source>
</reference>
<reference key="2">
    <citation type="journal article" date="1983" name="Toxicon 21 Suppl.">
        <title>Neurotoxins of sea snakes genus Laticauda.</title>
        <authorList>
            <person name="Tamiya N."/>
            <person name="Sato A."/>
            <person name="Kim H.S."/>
            <person name="Teruuchi T."/>
            <person name="Takasaki C."/>
            <person name="Ishikawa Y."/>
            <person name="Guinea M.L."/>
            <person name="McCoy M."/>
            <person name="Heatwole H."/>
            <person name="Cogger H.G."/>
        </authorList>
    </citation>
    <scope>PROTEIN SEQUENCE OF 22-83</scope>
    <scope>SUBCELLULAR LOCATION</scope>
    <source>
        <strain>New Caledonia</strain>
        <tissue>Venom</tissue>
    </source>
</reference>
<proteinExistence type="evidence at protein level"/>
<accession>P10456</accession>
<accession>Q9PRJ6</accession>
<name>3S1D_LATCO</name>
<sequence length="83" mass="9357">MKTLLLTLVVVTMVCLDLGYTRRCFNQQSSQPKTTKSCPPGENSCYNKQWRDHRGSITERGCGCPKVKPGIKLRCCESEDCNN</sequence>
<evidence type="ECO:0000250" key="1">
    <source>
        <dbReference type="UniProtKB" id="P0C1Z0"/>
    </source>
</evidence>
<evidence type="ECO:0000250" key="2">
    <source>
        <dbReference type="UniProtKB" id="P60775"/>
    </source>
</evidence>
<evidence type="ECO:0000269" key="3">
    <source ref="2"/>
</evidence>
<evidence type="ECO:0000305" key="4"/>
<keyword id="KW-0008">Acetylcholine receptor inhibiting toxin</keyword>
<keyword id="KW-0903">Direct protein sequencing</keyword>
<keyword id="KW-1015">Disulfide bond</keyword>
<keyword id="KW-0872">Ion channel impairing toxin</keyword>
<keyword id="KW-0528">Neurotoxin</keyword>
<keyword id="KW-0629">Postsynaptic neurotoxin</keyword>
<keyword id="KW-0964">Secreted</keyword>
<keyword id="KW-0732">Signal</keyword>
<keyword id="KW-0800">Toxin</keyword>
<comment type="function">
    <text evidence="2">Binds to muscle nicotinic acetylcholine receptor (nAChR) and inhibit acetylcholine from binding to the receptor, thereby impairing neuromuscular transmission.</text>
</comment>
<comment type="subcellular location">
    <subcellularLocation>
        <location evidence="3">Secreted</location>
    </subcellularLocation>
</comment>
<comment type="tissue specificity">
    <text evidence="4">Expressed by the venom gland.</text>
</comment>
<comment type="similarity">
    <text evidence="4">Belongs to the three-finger toxin family. Short-chain subfamily. Type I alpha-neurotoxin sub-subfamily.</text>
</comment>